<accession>Q2NUJ7</accession>
<protein>
    <recommendedName>
        <fullName evidence="1">Biotin synthase</fullName>
        <ecNumber evidence="1">2.8.1.6</ecNumber>
    </recommendedName>
</protein>
<feature type="chain" id="PRO_0000381638" description="Biotin synthase">
    <location>
        <begin position="1"/>
        <end position="345"/>
    </location>
</feature>
<feature type="domain" description="Radical SAM core" evidence="2">
    <location>
        <begin position="38"/>
        <end position="256"/>
    </location>
</feature>
<feature type="binding site" evidence="1">
    <location>
        <position position="53"/>
    </location>
    <ligand>
        <name>[4Fe-4S] cluster</name>
        <dbReference type="ChEBI" id="CHEBI:49883"/>
        <note>4Fe-4S-S-AdoMet</note>
    </ligand>
</feature>
<feature type="binding site" evidence="1">
    <location>
        <position position="57"/>
    </location>
    <ligand>
        <name>[4Fe-4S] cluster</name>
        <dbReference type="ChEBI" id="CHEBI:49883"/>
        <note>4Fe-4S-S-AdoMet</note>
    </ligand>
</feature>
<feature type="binding site" evidence="1">
    <location>
        <position position="60"/>
    </location>
    <ligand>
        <name>[4Fe-4S] cluster</name>
        <dbReference type="ChEBI" id="CHEBI:49883"/>
        <note>4Fe-4S-S-AdoMet</note>
    </ligand>
</feature>
<feature type="binding site" evidence="1">
    <location>
        <position position="97"/>
    </location>
    <ligand>
        <name>[2Fe-2S] cluster</name>
        <dbReference type="ChEBI" id="CHEBI:190135"/>
    </ligand>
</feature>
<feature type="binding site" evidence="1">
    <location>
        <position position="128"/>
    </location>
    <ligand>
        <name>[2Fe-2S] cluster</name>
        <dbReference type="ChEBI" id="CHEBI:190135"/>
    </ligand>
</feature>
<feature type="binding site" evidence="1">
    <location>
        <position position="188"/>
    </location>
    <ligand>
        <name>[2Fe-2S] cluster</name>
        <dbReference type="ChEBI" id="CHEBI:190135"/>
    </ligand>
</feature>
<feature type="binding site" evidence="1">
    <location>
        <position position="260"/>
    </location>
    <ligand>
        <name>[2Fe-2S] cluster</name>
        <dbReference type="ChEBI" id="CHEBI:190135"/>
    </ligand>
</feature>
<proteinExistence type="inferred from homology"/>
<reference key="1">
    <citation type="journal article" date="2006" name="Genome Res.">
        <title>Massive genome erosion and functional adaptations provide insights into the symbiotic lifestyle of Sodalis glossinidius in the tsetse host.</title>
        <authorList>
            <person name="Toh H."/>
            <person name="Weiss B.L."/>
            <person name="Perkin S.A.H."/>
            <person name="Yamashita A."/>
            <person name="Oshima K."/>
            <person name="Hattori M."/>
            <person name="Aksoy S."/>
        </authorList>
    </citation>
    <scope>NUCLEOTIDE SEQUENCE [LARGE SCALE GENOMIC DNA]</scope>
    <source>
        <strain>morsitans</strain>
    </source>
</reference>
<keyword id="KW-0001">2Fe-2S</keyword>
<keyword id="KW-0004">4Fe-4S</keyword>
<keyword id="KW-0093">Biotin biosynthesis</keyword>
<keyword id="KW-0408">Iron</keyword>
<keyword id="KW-0411">Iron-sulfur</keyword>
<keyword id="KW-0479">Metal-binding</keyword>
<keyword id="KW-0949">S-adenosyl-L-methionine</keyword>
<keyword id="KW-0808">Transferase</keyword>
<gene>
    <name evidence="1" type="primary">bioB</name>
    <name type="ordered locus">SG0903</name>
</gene>
<comment type="function">
    <text evidence="1">Catalyzes the conversion of dethiobiotin (DTB) to biotin by the insertion of a sulfur atom into dethiobiotin via a radical-based mechanism.</text>
</comment>
<comment type="catalytic activity">
    <reaction evidence="1">
        <text>(4R,5S)-dethiobiotin + (sulfur carrier)-SH + 2 reduced [2Fe-2S]-[ferredoxin] + 2 S-adenosyl-L-methionine = (sulfur carrier)-H + biotin + 2 5'-deoxyadenosine + 2 L-methionine + 2 oxidized [2Fe-2S]-[ferredoxin]</text>
        <dbReference type="Rhea" id="RHEA:22060"/>
        <dbReference type="Rhea" id="RHEA-COMP:10000"/>
        <dbReference type="Rhea" id="RHEA-COMP:10001"/>
        <dbReference type="Rhea" id="RHEA-COMP:14737"/>
        <dbReference type="Rhea" id="RHEA-COMP:14739"/>
        <dbReference type="ChEBI" id="CHEBI:17319"/>
        <dbReference type="ChEBI" id="CHEBI:29917"/>
        <dbReference type="ChEBI" id="CHEBI:33737"/>
        <dbReference type="ChEBI" id="CHEBI:33738"/>
        <dbReference type="ChEBI" id="CHEBI:57586"/>
        <dbReference type="ChEBI" id="CHEBI:57844"/>
        <dbReference type="ChEBI" id="CHEBI:59789"/>
        <dbReference type="ChEBI" id="CHEBI:64428"/>
        <dbReference type="ChEBI" id="CHEBI:149473"/>
        <dbReference type="EC" id="2.8.1.6"/>
    </reaction>
</comment>
<comment type="cofactor">
    <cofactor evidence="1">
        <name>[4Fe-4S] cluster</name>
        <dbReference type="ChEBI" id="CHEBI:49883"/>
    </cofactor>
    <text evidence="1">Binds 1 [4Fe-4S] cluster. The cluster is coordinated with 3 cysteines and an exchangeable S-adenosyl-L-methionine.</text>
</comment>
<comment type="cofactor">
    <cofactor evidence="1">
        <name>[2Fe-2S] cluster</name>
        <dbReference type="ChEBI" id="CHEBI:190135"/>
    </cofactor>
    <text evidence="1">Binds 1 [2Fe-2S] cluster. The cluster is coordinated with 3 cysteines and 1 arginine.</text>
</comment>
<comment type="pathway">
    <text evidence="1">Cofactor biosynthesis; biotin biosynthesis; biotin from 7,8-diaminononanoate: step 2/2.</text>
</comment>
<comment type="subunit">
    <text evidence="1">Homodimer.</text>
</comment>
<comment type="similarity">
    <text evidence="1">Belongs to the radical SAM superfamily. Biotin synthase family.</text>
</comment>
<name>BIOB_SODGM</name>
<evidence type="ECO:0000255" key="1">
    <source>
        <dbReference type="HAMAP-Rule" id="MF_01694"/>
    </source>
</evidence>
<evidence type="ECO:0000255" key="2">
    <source>
        <dbReference type="PROSITE-ProRule" id="PRU01266"/>
    </source>
</evidence>
<organism>
    <name type="scientific">Sodalis glossinidius (strain morsitans)</name>
    <dbReference type="NCBI Taxonomy" id="343509"/>
    <lineage>
        <taxon>Bacteria</taxon>
        <taxon>Pseudomonadati</taxon>
        <taxon>Pseudomonadota</taxon>
        <taxon>Gammaproteobacteria</taxon>
        <taxon>Enterobacterales</taxon>
        <taxon>Bruguierivoracaceae</taxon>
        <taxon>Sodalis</taxon>
    </lineage>
</organism>
<sequence>MSTSQRWTQAQARALFDKPFLELLFEAQQVHRQHFTPGEVQVSTLLSIKTGACPEDCKYCPQSARYSTGLESERLMQVQQVLDAARKARDAGSTRFCMGAAWKNPHDRDMPLLEQMVQGVKAMGLETCMTLGMLNDRQVQRLAEAGLDFYNHNLDTSPEFYGSIVTTRSYQDRLDTLSKVRQAGIKVCSGGIVGLGEDIRDRAGLLVQLANLPTPPESVPINMLVKVKGTPLADNEDVDPFEFIRTIAVARIMMPRSHVRLSAGREQMNEQTQALCFMAGANSVFYGCKLLTTPNPGEDRDMALFHKLGINIERRTATQGDVAQQAQLAEELLTADTAHYYNAAR</sequence>
<dbReference type="EC" id="2.8.1.6" evidence="1"/>
<dbReference type="EMBL" id="AP008232">
    <property type="protein sequence ID" value="BAE74178.1"/>
    <property type="molecule type" value="Genomic_DNA"/>
</dbReference>
<dbReference type="RefSeq" id="WP_011410764.1">
    <property type="nucleotide sequence ID" value="NC_007712.1"/>
</dbReference>
<dbReference type="SMR" id="Q2NUJ7"/>
<dbReference type="STRING" id="343509.SG0903"/>
<dbReference type="KEGG" id="sgl:SG0903"/>
<dbReference type="eggNOG" id="COG0502">
    <property type="taxonomic scope" value="Bacteria"/>
</dbReference>
<dbReference type="HOGENOM" id="CLU_033172_1_2_6"/>
<dbReference type="OrthoDB" id="9786826at2"/>
<dbReference type="BioCyc" id="SGLO343509:SGP1_RS07685-MONOMER"/>
<dbReference type="UniPathway" id="UPA00078">
    <property type="reaction ID" value="UER00162"/>
</dbReference>
<dbReference type="Proteomes" id="UP000001932">
    <property type="component" value="Chromosome"/>
</dbReference>
<dbReference type="GO" id="GO:0051537">
    <property type="term" value="F:2 iron, 2 sulfur cluster binding"/>
    <property type="evidence" value="ECO:0007669"/>
    <property type="project" value="UniProtKB-KW"/>
</dbReference>
<dbReference type="GO" id="GO:0051539">
    <property type="term" value="F:4 iron, 4 sulfur cluster binding"/>
    <property type="evidence" value="ECO:0007669"/>
    <property type="project" value="UniProtKB-KW"/>
</dbReference>
<dbReference type="GO" id="GO:0004076">
    <property type="term" value="F:biotin synthase activity"/>
    <property type="evidence" value="ECO:0007669"/>
    <property type="project" value="UniProtKB-UniRule"/>
</dbReference>
<dbReference type="GO" id="GO:0005506">
    <property type="term" value="F:iron ion binding"/>
    <property type="evidence" value="ECO:0007669"/>
    <property type="project" value="UniProtKB-UniRule"/>
</dbReference>
<dbReference type="GO" id="GO:0009102">
    <property type="term" value="P:biotin biosynthetic process"/>
    <property type="evidence" value="ECO:0007669"/>
    <property type="project" value="UniProtKB-UniRule"/>
</dbReference>
<dbReference type="CDD" id="cd01335">
    <property type="entry name" value="Radical_SAM"/>
    <property type="match status" value="1"/>
</dbReference>
<dbReference type="FunFam" id="3.20.20.70:FF:000011">
    <property type="entry name" value="Biotin synthase"/>
    <property type="match status" value="1"/>
</dbReference>
<dbReference type="Gene3D" id="3.20.20.70">
    <property type="entry name" value="Aldolase class I"/>
    <property type="match status" value="1"/>
</dbReference>
<dbReference type="HAMAP" id="MF_01694">
    <property type="entry name" value="BioB"/>
    <property type="match status" value="1"/>
</dbReference>
<dbReference type="InterPro" id="IPR013785">
    <property type="entry name" value="Aldolase_TIM"/>
</dbReference>
<dbReference type="InterPro" id="IPR010722">
    <property type="entry name" value="BATS_dom"/>
</dbReference>
<dbReference type="InterPro" id="IPR002684">
    <property type="entry name" value="Biotin_synth/BioAB"/>
</dbReference>
<dbReference type="InterPro" id="IPR024177">
    <property type="entry name" value="Biotin_synthase"/>
</dbReference>
<dbReference type="InterPro" id="IPR006638">
    <property type="entry name" value="Elp3/MiaA/NifB-like_rSAM"/>
</dbReference>
<dbReference type="InterPro" id="IPR007197">
    <property type="entry name" value="rSAM"/>
</dbReference>
<dbReference type="NCBIfam" id="TIGR00433">
    <property type="entry name" value="bioB"/>
    <property type="match status" value="1"/>
</dbReference>
<dbReference type="PANTHER" id="PTHR22976">
    <property type="entry name" value="BIOTIN SYNTHASE"/>
    <property type="match status" value="1"/>
</dbReference>
<dbReference type="PANTHER" id="PTHR22976:SF2">
    <property type="entry name" value="BIOTIN SYNTHASE, MITOCHONDRIAL"/>
    <property type="match status" value="1"/>
</dbReference>
<dbReference type="Pfam" id="PF06968">
    <property type="entry name" value="BATS"/>
    <property type="match status" value="1"/>
</dbReference>
<dbReference type="Pfam" id="PF04055">
    <property type="entry name" value="Radical_SAM"/>
    <property type="match status" value="1"/>
</dbReference>
<dbReference type="PIRSF" id="PIRSF001619">
    <property type="entry name" value="Biotin_synth"/>
    <property type="match status" value="1"/>
</dbReference>
<dbReference type="SFLD" id="SFLDF00272">
    <property type="entry name" value="biotin_synthase"/>
    <property type="match status" value="1"/>
</dbReference>
<dbReference type="SFLD" id="SFLDG01278">
    <property type="entry name" value="biotin_synthase_like"/>
    <property type="match status" value="1"/>
</dbReference>
<dbReference type="SMART" id="SM00876">
    <property type="entry name" value="BATS"/>
    <property type="match status" value="1"/>
</dbReference>
<dbReference type="SMART" id="SM00729">
    <property type="entry name" value="Elp3"/>
    <property type="match status" value="1"/>
</dbReference>
<dbReference type="SUPFAM" id="SSF102114">
    <property type="entry name" value="Radical SAM enzymes"/>
    <property type="match status" value="1"/>
</dbReference>
<dbReference type="PROSITE" id="PS51918">
    <property type="entry name" value="RADICAL_SAM"/>
    <property type="match status" value="1"/>
</dbReference>